<evidence type="ECO:0000250" key="1"/>
<evidence type="ECO:0000256" key="2">
    <source>
        <dbReference type="SAM" id="MobiDB-lite"/>
    </source>
</evidence>
<evidence type="ECO:0000269" key="3">
    <source>
    </source>
</evidence>
<evidence type="ECO:0000305" key="4"/>
<reference key="1">
    <citation type="online journal article" date="1999" name="Plant Gene Register">
        <title>Nucleotide sequence of a cDNA encoding an Arabidopsis urease accessory protein.</title>
        <authorList>
            <person name="Freyermuth S.K."/>
            <person name="Forde B.G."/>
            <person name="Polacco J.C."/>
        </authorList>
        <locator>PGR99-012</locator>
    </citation>
    <scope>NUCLEOTIDE SEQUENCE [MRNA]</scope>
</reference>
<reference key="2">
    <citation type="journal article" date="1999" name="Nature">
        <title>Sequence and analysis of chromosome 2 of the plant Arabidopsis thaliana.</title>
        <authorList>
            <person name="Lin X."/>
            <person name="Kaul S."/>
            <person name="Rounsley S.D."/>
            <person name="Shea T.P."/>
            <person name="Benito M.-I."/>
            <person name="Town C.D."/>
            <person name="Fujii C.Y."/>
            <person name="Mason T.M."/>
            <person name="Bowman C.L."/>
            <person name="Barnstead M.E."/>
            <person name="Feldblyum T.V."/>
            <person name="Buell C.R."/>
            <person name="Ketchum K.A."/>
            <person name="Lee J.J."/>
            <person name="Ronning C.M."/>
            <person name="Koo H.L."/>
            <person name="Moffat K.S."/>
            <person name="Cronin L.A."/>
            <person name="Shen M."/>
            <person name="Pai G."/>
            <person name="Van Aken S."/>
            <person name="Umayam L."/>
            <person name="Tallon L.J."/>
            <person name="Gill J.E."/>
            <person name="Adams M.D."/>
            <person name="Carrera A.J."/>
            <person name="Creasy T.H."/>
            <person name="Goodman H.M."/>
            <person name="Somerville C.R."/>
            <person name="Copenhaver G.P."/>
            <person name="Preuss D."/>
            <person name="Nierman W.C."/>
            <person name="White O."/>
            <person name="Eisen J.A."/>
            <person name="Salzberg S.L."/>
            <person name="Fraser C.M."/>
            <person name="Venter J.C."/>
        </authorList>
    </citation>
    <scope>NUCLEOTIDE SEQUENCE [LARGE SCALE GENOMIC DNA]</scope>
    <source>
        <strain>cv. Columbia</strain>
    </source>
</reference>
<reference key="3">
    <citation type="journal article" date="2017" name="Plant J.">
        <title>Araport11: a complete reannotation of the Arabidopsis thaliana reference genome.</title>
        <authorList>
            <person name="Cheng C.Y."/>
            <person name="Krishnakumar V."/>
            <person name="Chan A.P."/>
            <person name="Thibaud-Nissen F."/>
            <person name="Schobel S."/>
            <person name="Town C.D."/>
        </authorList>
    </citation>
    <scope>GENOME REANNOTATION</scope>
    <source>
        <strain>cv. Columbia</strain>
    </source>
</reference>
<reference key="4">
    <citation type="journal article" date="2003" name="Science">
        <title>Empirical analysis of transcriptional activity in the Arabidopsis genome.</title>
        <authorList>
            <person name="Yamada K."/>
            <person name="Lim J."/>
            <person name="Dale J.M."/>
            <person name="Chen H."/>
            <person name="Shinn P."/>
            <person name="Palm C.J."/>
            <person name="Southwick A.M."/>
            <person name="Wu H.C."/>
            <person name="Kim C.J."/>
            <person name="Nguyen M."/>
            <person name="Pham P.K."/>
            <person name="Cheuk R.F."/>
            <person name="Karlin-Newmann G."/>
            <person name="Liu S.X."/>
            <person name="Lam B."/>
            <person name="Sakano H."/>
            <person name="Wu T."/>
            <person name="Yu G."/>
            <person name="Miranda M."/>
            <person name="Quach H.L."/>
            <person name="Tripp M."/>
            <person name="Chang C.H."/>
            <person name="Lee J.M."/>
            <person name="Toriumi M.J."/>
            <person name="Chan M.M."/>
            <person name="Tang C.C."/>
            <person name="Onodera C.S."/>
            <person name="Deng J.M."/>
            <person name="Akiyama K."/>
            <person name="Ansari Y."/>
            <person name="Arakawa T."/>
            <person name="Banh J."/>
            <person name="Banno F."/>
            <person name="Bowser L."/>
            <person name="Brooks S.Y."/>
            <person name="Carninci P."/>
            <person name="Chao Q."/>
            <person name="Choy N."/>
            <person name="Enju A."/>
            <person name="Goldsmith A.D."/>
            <person name="Gurjal M."/>
            <person name="Hansen N.F."/>
            <person name="Hayashizaki Y."/>
            <person name="Johnson-Hopson C."/>
            <person name="Hsuan V.W."/>
            <person name="Iida K."/>
            <person name="Karnes M."/>
            <person name="Khan S."/>
            <person name="Koesema E."/>
            <person name="Ishida J."/>
            <person name="Jiang P.X."/>
            <person name="Jones T."/>
            <person name="Kawai J."/>
            <person name="Kamiya A."/>
            <person name="Meyers C."/>
            <person name="Nakajima M."/>
            <person name="Narusaka M."/>
            <person name="Seki M."/>
            <person name="Sakurai T."/>
            <person name="Satou M."/>
            <person name="Tamse R."/>
            <person name="Vaysberg M."/>
            <person name="Wallender E.K."/>
            <person name="Wong C."/>
            <person name="Yamamura Y."/>
            <person name="Yuan S."/>
            <person name="Shinozaki K."/>
            <person name="Davis R.W."/>
            <person name="Theologis A."/>
            <person name="Ecker J.R."/>
        </authorList>
    </citation>
    <scope>NUCLEOTIDE SEQUENCE [LARGE SCALE MRNA]</scope>
    <source>
        <strain>cv. Columbia</strain>
    </source>
</reference>
<reference key="5">
    <citation type="submission" date="2002-03" db="EMBL/GenBank/DDBJ databases">
        <title>Full-length cDNA from Arabidopsis thaliana.</title>
        <authorList>
            <person name="Brover V.V."/>
            <person name="Troukhan M.E."/>
            <person name="Alexandrov N.A."/>
            <person name="Lu Y.-P."/>
            <person name="Flavell R.B."/>
            <person name="Feldmann K.A."/>
        </authorList>
    </citation>
    <scope>NUCLEOTIDE SEQUENCE [LARGE SCALE MRNA]</scope>
</reference>
<reference key="6">
    <citation type="journal article" date="2005" name="Plant Physiol.">
        <title>Identification of three urease accessory proteins that are required for urease activation in Arabidopsis.</title>
        <authorList>
            <person name="Witte C.P."/>
            <person name="Rosso M.G."/>
            <person name="Romeis T."/>
        </authorList>
    </citation>
    <scope>FUNCTION</scope>
    <scope>DISRUPTION PHENOTYPE</scope>
</reference>
<proteinExistence type="evidence at transcript level"/>
<gene>
    <name type="primary">UREG</name>
    <name type="ordered locus">At2g34470</name>
</gene>
<name>UREG_ARATH</name>
<sequence length="275" mass="30083">MASHDHHHHHHDHEHDHEKSDGGEGKASWVGKDGKVYHSHDGLAPHSHEPIYSPGYFSRRAPPLHDRNFSERAFTVGIGGPVGTGKTALMLALCRFLRDKYSLAAVTNDIFTKEDGEFLVKNGALPEERIRAVETGGCPHAAIREDISINLGPLEELSNLFKADLLLCESGGDNLAANFSRELADYIIYIIDVSAGDKIPRKGGPGITQADLLVINKTDLAAAVGADLSVMERDSLRMRDGGPFVFAQVKHGLGVEEIVNHVMHSWEHATGKKRQ</sequence>
<comment type="function">
    <text evidence="3">Required for the maturation and activation of urease via the functional incorporation of the urease nickel metallocenter.</text>
</comment>
<comment type="subunit">
    <text evidence="1">URED, UREF and UREG may form a complex that acts as a GTP-hydrolysis-dependent molecular chaperone, activating the urease apoprotein.</text>
</comment>
<comment type="alternative products">
    <event type="alternative splicing"/>
    <isoform>
        <id>O64700-1</id>
        <name>1</name>
        <sequence type="displayed"/>
    </isoform>
    <text>A number of isoforms are produced. According to EST sequences.</text>
</comment>
<comment type="disruption phenotype">
    <text evidence="3">No visible phenotype under normal growth conditions, but mutant plants cannot grow on medium with urea as the sole source of nitrogen.</text>
</comment>
<comment type="similarity">
    <text evidence="4">Belongs to the SIMIBI class G3E GTPase family. UreG subfamily.</text>
</comment>
<protein>
    <recommendedName>
        <fullName>Urease accessory protein G</fullName>
        <shortName>AtUREG</shortName>
    </recommendedName>
</protein>
<keyword id="KW-0025">Alternative splicing</keyword>
<keyword id="KW-0143">Chaperone</keyword>
<keyword id="KW-0342">GTP-binding</keyword>
<keyword id="KW-0996">Nickel insertion</keyword>
<keyword id="KW-0547">Nucleotide-binding</keyword>
<keyword id="KW-1185">Reference proteome</keyword>
<organism>
    <name type="scientific">Arabidopsis thaliana</name>
    <name type="common">Mouse-ear cress</name>
    <dbReference type="NCBI Taxonomy" id="3702"/>
    <lineage>
        <taxon>Eukaryota</taxon>
        <taxon>Viridiplantae</taxon>
        <taxon>Streptophyta</taxon>
        <taxon>Embryophyta</taxon>
        <taxon>Tracheophyta</taxon>
        <taxon>Spermatophyta</taxon>
        <taxon>Magnoliopsida</taxon>
        <taxon>eudicotyledons</taxon>
        <taxon>Gunneridae</taxon>
        <taxon>Pentapetalae</taxon>
        <taxon>rosids</taxon>
        <taxon>malvids</taxon>
        <taxon>Brassicales</taxon>
        <taxon>Brassicaceae</taxon>
        <taxon>Camelineae</taxon>
        <taxon>Arabidopsis</taxon>
    </lineage>
</organism>
<dbReference type="EMBL" id="AF109374">
    <property type="protein sequence ID" value="AAD16984.1"/>
    <property type="molecule type" value="mRNA"/>
</dbReference>
<dbReference type="EMBL" id="AC004077">
    <property type="protein sequence ID" value="AAC26700.1"/>
    <property type="molecule type" value="Genomic_DNA"/>
</dbReference>
<dbReference type="EMBL" id="AC004481">
    <property type="protein sequence ID" value="AAM14950.1"/>
    <property type="molecule type" value="Genomic_DNA"/>
</dbReference>
<dbReference type="EMBL" id="CP002685">
    <property type="protein sequence ID" value="AEC08978.1"/>
    <property type="molecule type" value="Genomic_DNA"/>
</dbReference>
<dbReference type="EMBL" id="AK119138">
    <property type="protein sequence ID" value="BAC43708.1"/>
    <property type="molecule type" value="mRNA"/>
</dbReference>
<dbReference type="EMBL" id="BT005276">
    <property type="protein sequence ID" value="AAO63340.1"/>
    <property type="molecule type" value="mRNA"/>
</dbReference>
<dbReference type="EMBL" id="AY085812">
    <property type="protein sequence ID" value="AAM63028.1"/>
    <property type="molecule type" value="mRNA"/>
</dbReference>
<dbReference type="PIR" id="T02334">
    <property type="entry name" value="T02334"/>
</dbReference>
<dbReference type="PIR" id="T52333">
    <property type="entry name" value="T52333"/>
</dbReference>
<dbReference type="RefSeq" id="NP_180994.1">
    <molecule id="O64700-1"/>
    <property type="nucleotide sequence ID" value="NM_128999.3"/>
</dbReference>
<dbReference type="SMR" id="O64700"/>
<dbReference type="BioGRID" id="3357">
    <property type="interactions" value="2"/>
</dbReference>
<dbReference type="ComplexPortal" id="CPX-1296">
    <property type="entry name" value="Urease activation complex"/>
</dbReference>
<dbReference type="FunCoup" id="O64700">
    <property type="interactions" value="374"/>
</dbReference>
<dbReference type="STRING" id="3702.O64700"/>
<dbReference type="iPTMnet" id="O64700"/>
<dbReference type="PaxDb" id="3702-AT2G34470.2"/>
<dbReference type="ProMEX" id="O64700"/>
<dbReference type="ProteomicsDB" id="228630">
    <molecule id="O64700-1"/>
</dbReference>
<dbReference type="EnsemblPlants" id="AT2G34470.1">
    <molecule id="O64700-1"/>
    <property type="protein sequence ID" value="AT2G34470.1"/>
    <property type="gene ID" value="AT2G34470"/>
</dbReference>
<dbReference type="GeneID" id="818010"/>
<dbReference type="Gramene" id="AT2G34470.1">
    <molecule id="O64700-1"/>
    <property type="protein sequence ID" value="AT2G34470.1"/>
    <property type="gene ID" value="AT2G34470"/>
</dbReference>
<dbReference type="KEGG" id="ath:AT2G34470"/>
<dbReference type="Araport" id="AT2G34470"/>
<dbReference type="TAIR" id="AT2G34470">
    <property type="gene designation" value="UREG"/>
</dbReference>
<dbReference type="eggNOG" id="ENOG502QR6E">
    <property type="taxonomic scope" value="Eukaryota"/>
</dbReference>
<dbReference type="InParanoid" id="O64700"/>
<dbReference type="OMA" id="KMRGDKP"/>
<dbReference type="OrthoDB" id="10063137at2759"/>
<dbReference type="PhylomeDB" id="O64700"/>
<dbReference type="PRO" id="PR:O64700"/>
<dbReference type="Proteomes" id="UP000006548">
    <property type="component" value="Chromosome 2"/>
</dbReference>
<dbReference type="ExpressionAtlas" id="O64700">
    <property type="expression patterns" value="baseline and differential"/>
</dbReference>
<dbReference type="GO" id="GO:0150006">
    <property type="term" value="C:urease activator complex"/>
    <property type="evidence" value="ECO:0000353"/>
    <property type="project" value="ComplexPortal"/>
</dbReference>
<dbReference type="GO" id="GO:0005525">
    <property type="term" value="F:GTP binding"/>
    <property type="evidence" value="ECO:0007669"/>
    <property type="project" value="UniProtKB-KW"/>
</dbReference>
<dbReference type="GO" id="GO:0003924">
    <property type="term" value="F:GTPase activity"/>
    <property type="evidence" value="ECO:0007669"/>
    <property type="project" value="InterPro"/>
</dbReference>
<dbReference type="GO" id="GO:0016151">
    <property type="term" value="F:nickel cation binding"/>
    <property type="evidence" value="ECO:0007669"/>
    <property type="project" value="InterPro"/>
</dbReference>
<dbReference type="GO" id="GO:0051604">
    <property type="term" value="P:protein maturation"/>
    <property type="evidence" value="ECO:0000315"/>
    <property type="project" value="UniProtKB"/>
</dbReference>
<dbReference type="GO" id="GO:0043419">
    <property type="term" value="P:urea catabolic process"/>
    <property type="evidence" value="ECO:0000314"/>
    <property type="project" value="ComplexPortal"/>
</dbReference>
<dbReference type="CDD" id="cd05540">
    <property type="entry name" value="UreG"/>
    <property type="match status" value="1"/>
</dbReference>
<dbReference type="FunFam" id="3.40.50.300:FF:000208">
    <property type="entry name" value="Urease accessory protein UreG"/>
    <property type="match status" value="1"/>
</dbReference>
<dbReference type="Gene3D" id="3.40.50.300">
    <property type="entry name" value="P-loop containing nucleotide triphosphate hydrolases"/>
    <property type="match status" value="1"/>
</dbReference>
<dbReference type="HAMAP" id="MF_01389">
    <property type="entry name" value="UreG"/>
    <property type="match status" value="1"/>
</dbReference>
<dbReference type="InterPro" id="IPR003495">
    <property type="entry name" value="CobW/HypB/UreG_nucleotide-bd"/>
</dbReference>
<dbReference type="InterPro" id="IPR027417">
    <property type="entry name" value="P-loop_NTPase"/>
</dbReference>
<dbReference type="InterPro" id="IPR004400">
    <property type="entry name" value="UreG"/>
</dbReference>
<dbReference type="NCBIfam" id="TIGR00101">
    <property type="entry name" value="ureG"/>
    <property type="match status" value="1"/>
</dbReference>
<dbReference type="PANTHER" id="PTHR31715">
    <property type="entry name" value="UREASE ACCESSORY PROTEIN G"/>
    <property type="match status" value="1"/>
</dbReference>
<dbReference type="PANTHER" id="PTHR31715:SF0">
    <property type="entry name" value="UREASE ACCESSORY PROTEIN G"/>
    <property type="match status" value="1"/>
</dbReference>
<dbReference type="Pfam" id="PF02492">
    <property type="entry name" value="cobW"/>
    <property type="match status" value="1"/>
</dbReference>
<dbReference type="SUPFAM" id="SSF52540">
    <property type="entry name" value="P-loop containing nucleoside triphosphate hydrolases"/>
    <property type="match status" value="1"/>
</dbReference>
<feature type="chain" id="PRO_0000424255" description="Urease accessory protein G">
    <location>
        <begin position="1"/>
        <end position="275"/>
    </location>
</feature>
<feature type="region of interest" description="Disordered" evidence="2">
    <location>
        <begin position="1"/>
        <end position="31"/>
    </location>
</feature>
<feature type="compositionally biased region" description="Basic residues" evidence="2">
    <location>
        <begin position="1"/>
        <end position="12"/>
    </location>
</feature>
<feature type="compositionally biased region" description="Basic and acidic residues" evidence="2">
    <location>
        <begin position="13"/>
        <end position="24"/>
    </location>
</feature>
<feature type="binding site" evidence="1">
    <location>
        <begin position="80"/>
        <end position="87"/>
    </location>
    <ligand>
        <name>GTP</name>
        <dbReference type="ChEBI" id="CHEBI:37565"/>
    </ligand>
</feature>
<feature type="sequence conflict" description="In Ref. 1; AAD16984." evidence="4" ref="1">
    <original>H</original>
    <variation>P</variation>
    <location>
        <position position="7"/>
    </location>
</feature>
<feature type="sequence conflict" description="In Ref. 1; AAD16984." evidence="4" ref="1">
    <original>L</original>
    <variation>P</variation>
    <location>
        <position position="125"/>
    </location>
</feature>
<accession>O64700</accession>
<accession>Q9SYT8</accession>